<name>ULAK_MOUSE</name>
<proteinExistence type="uncertain"/>
<feature type="chain" id="PRO_0000055457" description="Unknown protein from spot 2D-0014LD of 2D-PAGE of liver tissue">
    <location>
        <begin position="1"/>
        <end position="9" status="greater than"/>
    </location>
</feature>
<feature type="non-terminal residue">
    <location>
        <position position="9"/>
    </location>
</feature>
<comment type="miscellaneous">
    <text>On the 2D-gel the determined pI of this unknown protein is: 6.0, its MW is: 12.5 kDa.</text>
</comment>
<keyword id="KW-0903">Direct protein sequencing</keyword>
<keyword id="KW-1185">Reference proteome</keyword>
<accession>P99031</accession>
<organism>
    <name type="scientific">Mus musculus</name>
    <name type="common">Mouse</name>
    <dbReference type="NCBI Taxonomy" id="10090"/>
    <lineage>
        <taxon>Eukaryota</taxon>
        <taxon>Metazoa</taxon>
        <taxon>Chordata</taxon>
        <taxon>Craniata</taxon>
        <taxon>Vertebrata</taxon>
        <taxon>Euteleostomi</taxon>
        <taxon>Mammalia</taxon>
        <taxon>Eutheria</taxon>
        <taxon>Euarchontoglires</taxon>
        <taxon>Glires</taxon>
        <taxon>Rodentia</taxon>
        <taxon>Myomorpha</taxon>
        <taxon>Muroidea</taxon>
        <taxon>Muridae</taxon>
        <taxon>Murinae</taxon>
        <taxon>Mus</taxon>
        <taxon>Mus</taxon>
    </lineage>
</organism>
<sequence>XXNERKVIQ</sequence>
<reference key="1">
    <citation type="submission" date="1998-08" db="UniProtKB">
        <authorList>
            <person name="Sanchez J.-C."/>
            <person name="Rouge V."/>
            <person name="Frutiger S."/>
            <person name="Hughes G.J."/>
            <person name="Yan J.X."/>
            <person name="Hoogland C."/>
            <person name="Appel R.D."/>
            <person name="Binz P.-A."/>
            <person name="Hochstrasser D.F."/>
            <person name="Cowthorne M."/>
        </authorList>
    </citation>
    <scope>PROTEIN SEQUENCE</scope>
    <source>
        <tissue>Liver</tissue>
    </source>
</reference>
<protein>
    <recommendedName>
        <fullName>Unknown protein from spot 2D-0014LD of 2D-PAGE of liver tissue</fullName>
    </recommendedName>
</protein>
<dbReference type="InParanoid" id="P99031"/>
<dbReference type="Proteomes" id="UP000000589">
    <property type="component" value="Unplaced"/>
</dbReference>